<evidence type="ECO:0000255" key="1">
    <source>
        <dbReference type="HAMAP-Rule" id="MF_00260"/>
    </source>
</evidence>
<reference key="1">
    <citation type="journal article" date="2008" name="BMC Genomics">
        <title>Genomics of an extreme psychrophile, Psychromonas ingrahamii.</title>
        <authorList>
            <person name="Riley M."/>
            <person name="Staley J.T."/>
            <person name="Danchin A."/>
            <person name="Wang T.Z."/>
            <person name="Brettin T.S."/>
            <person name="Hauser L.J."/>
            <person name="Land M.L."/>
            <person name="Thompson L.S."/>
        </authorList>
    </citation>
    <scope>NUCLEOTIDE SEQUENCE [LARGE SCALE GENOMIC DNA]</scope>
    <source>
        <strain>DSM 17664 / CCUG 51855 / 37</strain>
    </source>
</reference>
<keyword id="KW-0627">Porphyrin biosynthesis</keyword>
<keyword id="KW-1185">Reference proteome</keyword>
<keyword id="KW-0808">Transferase</keyword>
<proteinExistence type="inferred from homology"/>
<sequence length="310" mass="34210">MTAQKIRIATRHSPLAMWQANFIKSELLKYHPNLIVELLPMKTKGDIILDTPLAKVGGKGLFVKELEVAILEGRADIAVHSIKDVPVDFPEGLGLTTICKREDPHDAFVSNHYKQLDELPEGAIVGTCSLRRQCQILALRPDIIIKNLRGNVNTRLRKLDEGEYDAIILAAAGLMRLEMQHRITSLIAPEVSLPAVGQGAVGIECRLDDEQTITLLKPLEDPETRIRITAERAMNLKLQGGCQVPIGSFAILENEQLFLRGLVGSVDGKQIIRKEITGHQNDAQQLGITLAEQLLACGAEEILAEVYKNQ</sequence>
<name>HEM3_PSYIN</name>
<accession>A1T0R0</accession>
<dbReference type="EC" id="2.5.1.61" evidence="1"/>
<dbReference type="EMBL" id="CP000510">
    <property type="protein sequence ID" value="ABM05325.1"/>
    <property type="molecule type" value="Genomic_DNA"/>
</dbReference>
<dbReference type="RefSeq" id="WP_011771873.1">
    <property type="nucleotide sequence ID" value="NC_008709.1"/>
</dbReference>
<dbReference type="SMR" id="A1T0R0"/>
<dbReference type="STRING" id="357804.Ping_3642"/>
<dbReference type="KEGG" id="pin:Ping_3642"/>
<dbReference type="eggNOG" id="COG0181">
    <property type="taxonomic scope" value="Bacteria"/>
</dbReference>
<dbReference type="HOGENOM" id="CLU_019704_0_2_6"/>
<dbReference type="OrthoDB" id="9810298at2"/>
<dbReference type="UniPathway" id="UPA00251">
    <property type="reaction ID" value="UER00319"/>
</dbReference>
<dbReference type="Proteomes" id="UP000000639">
    <property type="component" value="Chromosome"/>
</dbReference>
<dbReference type="GO" id="GO:0005737">
    <property type="term" value="C:cytoplasm"/>
    <property type="evidence" value="ECO:0007669"/>
    <property type="project" value="TreeGrafter"/>
</dbReference>
<dbReference type="GO" id="GO:0004418">
    <property type="term" value="F:hydroxymethylbilane synthase activity"/>
    <property type="evidence" value="ECO:0007669"/>
    <property type="project" value="UniProtKB-UniRule"/>
</dbReference>
<dbReference type="GO" id="GO:0006782">
    <property type="term" value="P:protoporphyrinogen IX biosynthetic process"/>
    <property type="evidence" value="ECO:0007669"/>
    <property type="project" value="UniProtKB-UniRule"/>
</dbReference>
<dbReference type="CDD" id="cd13646">
    <property type="entry name" value="PBP2_EcHMBS_like"/>
    <property type="match status" value="1"/>
</dbReference>
<dbReference type="FunFam" id="3.30.160.40:FF:000002">
    <property type="entry name" value="Porphobilinogen deaminase"/>
    <property type="match status" value="1"/>
</dbReference>
<dbReference type="FunFam" id="3.40.190.10:FF:000004">
    <property type="entry name" value="Porphobilinogen deaminase"/>
    <property type="match status" value="1"/>
</dbReference>
<dbReference type="FunFam" id="3.40.190.10:FF:000005">
    <property type="entry name" value="Porphobilinogen deaminase"/>
    <property type="match status" value="1"/>
</dbReference>
<dbReference type="Gene3D" id="3.40.190.10">
    <property type="entry name" value="Periplasmic binding protein-like II"/>
    <property type="match status" value="2"/>
</dbReference>
<dbReference type="Gene3D" id="3.30.160.40">
    <property type="entry name" value="Porphobilinogen deaminase, C-terminal domain"/>
    <property type="match status" value="1"/>
</dbReference>
<dbReference type="HAMAP" id="MF_00260">
    <property type="entry name" value="Porphobil_deam"/>
    <property type="match status" value="1"/>
</dbReference>
<dbReference type="InterPro" id="IPR000860">
    <property type="entry name" value="HemC"/>
</dbReference>
<dbReference type="InterPro" id="IPR022419">
    <property type="entry name" value="Porphobilin_deaminase_cofac_BS"/>
</dbReference>
<dbReference type="InterPro" id="IPR022417">
    <property type="entry name" value="Porphobilin_deaminase_N"/>
</dbReference>
<dbReference type="InterPro" id="IPR022418">
    <property type="entry name" value="Porphobilinogen_deaminase_C"/>
</dbReference>
<dbReference type="InterPro" id="IPR036803">
    <property type="entry name" value="Porphobilinogen_deaminase_C_sf"/>
</dbReference>
<dbReference type="NCBIfam" id="TIGR00212">
    <property type="entry name" value="hemC"/>
    <property type="match status" value="1"/>
</dbReference>
<dbReference type="PANTHER" id="PTHR11557">
    <property type="entry name" value="PORPHOBILINOGEN DEAMINASE"/>
    <property type="match status" value="1"/>
</dbReference>
<dbReference type="PANTHER" id="PTHR11557:SF0">
    <property type="entry name" value="PORPHOBILINOGEN DEAMINASE"/>
    <property type="match status" value="1"/>
</dbReference>
<dbReference type="Pfam" id="PF01379">
    <property type="entry name" value="Porphobil_deam"/>
    <property type="match status" value="1"/>
</dbReference>
<dbReference type="Pfam" id="PF03900">
    <property type="entry name" value="Porphobil_deamC"/>
    <property type="match status" value="1"/>
</dbReference>
<dbReference type="PIRSF" id="PIRSF001438">
    <property type="entry name" value="4pyrrol_synth_OHMeBilane_synth"/>
    <property type="match status" value="1"/>
</dbReference>
<dbReference type="PRINTS" id="PR00151">
    <property type="entry name" value="PORPHBDMNASE"/>
</dbReference>
<dbReference type="SUPFAM" id="SSF53850">
    <property type="entry name" value="Periplasmic binding protein-like II"/>
    <property type="match status" value="1"/>
</dbReference>
<dbReference type="SUPFAM" id="SSF54782">
    <property type="entry name" value="Porphobilinogen deaminase (hydroxymethylbilane synthase), C-terminal domain"/>
    <property type="match status" value="1"/>
</dbReference>
<dbReference type="PROSITE" id="PS00533">
    <property type="entry name" value="PORPHOBILINOGEN_DEAM"/>
    <property type="match status" value="1"/>
</dbReference>
<gene>
    <name evidence="1" type="primary">hemC</name>
    <name type="ordered locus">Ping_3642</name>
</gene>
<comment type="function">
    <text evidence="1">Tetrapolymerization of the monopyrrole PBG into the hydroxymethylbilane pre-uroporphyrinogen in several discrete steps.</text>
</comment>
<comment type="catalytic activity">
    <reaction evidence="1">
        <text>4 porphobilinogen + H2O = hydroxymethylbilane + 4 NH4(+)</text>
        <dbReference type="Rhea" id="RHEA:13185"/>
        <dbReference type="ChEBI" id="CHEBI:15377"/>
        <dbReference type="ChEBI" id="CHEBI:28938"/>
        <dbReference type="ChEBI" id="CHEBI:57845"/>
        <dbReference type="ChEBI" id="CHEBI:58126"/>
        <dbReference type="EC" id="2.5.1.61"/>
    </reaction>
</comment>
<comment type="cofactor">
    <cofactor evidence="1">
        <name>dipyrromethane</name>
        <dbReference type="ChEBI" id="CHEBI:60342"/>
    </cofactor>
    <text evidence="1">Binds 1 dipyrromethane group covalently.</text>
</comment>
<comment type="pathway">
    <text evidence="1">Porphyrin-containing compound metabolism; protoporphyrin-IX biosynthesis; coproporphyrinogen-III from 5-aminolevulinate: step 2/4.</text>
</comment>
<comment type="subunit">
    <text evidence="1">Monomer.</text>
</comment>
<comment type="miscellaneous">
    <text evidence="1">The porphobilinogen subunits are added to the dipyrromethane group.</text>
</comment>
<comment type="similarity">
    <text evidence="1">Belongs to the HMBS family.</text>
</comment>
<feature type="chain" id="PRO_1000047759" description="Porphobilinogen deaminase">
    <location>
        <begin position="1"/>
        <end position="310"/>
    </location>
</feature>
<feature type="modified residue" description="S-(dipyrrolylmethanemethyl)cysteine" evidence="1">
    <location>
        <position position="242"/>
    </location>
</feature>
<organism>
    <name type="scientific">Psychromonas ingrahamii (strain DSM 17664 / CCUG 51855 / 37)</name>
    <dbReference type="NCBI Taxonomy" id="357804"/>
    <lineage>
        <taxon>Bacteria</taxon>
        <taxon>Pseudomonadati</taxon>
        <taxon>Pseudomonadota</taxon>
        <taxon>Gammaproteobacteria</taxon>
        <taxon>Alteromonadales</taxon>
        <taxon>Psychromonadaceae</taxon>
        <taxon>Psychromonas</taxon>
    </lineage>
</organism>
<protein>
    <recommendedName>
        <fullName evidence="1">Porphobilinogen deaminase</fullName>
        <shortName evidence="1">PBG</shortName>
        <ecNumber evidence="1">2.5.1.61</ecNumber>
    </recommendedName>
    <alternativeName>
        <fullName evidence="1">Hydroxymethylbilane synthase</fullName>
        <shortName evidence="1">HMBS</shortName>
    </alternativeName>
    <alternativeName>
        <fullName evidence="1">Pre-uroporphyrinogen synthase</fullName>
    </alternativeName>
</protein>